<proteinExistence type="inferred from homology"/>
<feature type="chain" id="PRO_0000428410" description="Hydroxymethylpyrimidine/phosphomethylpyrimidine kinase">
    <location>
        <begin position="1"/>
        <end position="275"/>
    </location>
</feature>
<feature type="binding site" evidence="1">
    <location>
        <position position="54"/>
    </location>
    <ligand>
        <name>4-amino-5-hydroxymethyl-2-methylpyrimidine</name>
        <dbReference type="ChEBI" id="CHEBI:16892"/>
    </ligand>
</feature>
<gene>
    <name type="primary">thiD</name>
    <name type="ordered locus">MT0436</name>
</gene>
<name>THID_MYCTO</name>
<protein>
    <recommendedName>
        <fullName>Hydroxymethylpyrimidine/phosphomethylpyrimidine kinase</fullName>
        <ecNumber evidence="2">2.7.1.49</ecNumber>
        <ecNumber evidence="2">2.7.4.7</ecNumber>
    </recommendedName>
    <alternativeName>
        <fullName>Hydroxymethylpyrimidine kinase</fullName>
        <shortName>HMP kinase</shortName>
    </alternativeName>
    <alternativeName>
        <fullName>Hydroxymethylpyrimidine phosphate kinase</fullName>
        <shortName>HMP-P kinase</shortName>
        <shortName>HMP-phosphate kinase</shortName>
        <shortName>HMPP kinase</shortName>
    </alternativeName>
</protein>
<organism>
    <name type="scientific">Mycobacterium tuberculosis (strain CDC 1551 / Oshkosh)</name>
    <dbReference type="NCBI Taxonomy" id="83331"/>
    <lineage>
        <taxon>Bacteria</taxon>
        <taxon>Bacillati</taxon>
        <taxon>Actinomycetota</taxon>
        <taxon>Actinomycetes</taxon>
        <taxon>Mycobacteriales</taxon>
        <taxon>Mycobacteriaceae</taxon>
        <taxon>Mycobacterium</taxon>
        <taxon>Mycobacterium tuberculosis complex</taxon>
    </lineage>
</organism>
<keyword id="KW-0067">ATP-binding</keyword>
<keyword id="KW-0418">Kinase</keyword>
<keyword id="KW-0547">Nucleotide-binding</keyword>
<keyword id="KW-1185">Reference proteome</keyword>
<keyword id="KW-0784">Thiamine biosynthesis</keyword>
<keyword id="KW-0808">Transferase</keyword>
<sequence length="275" mass="28565">MNYLPLAPPGMTPPRVLSIAGSDSGGGAGIQADMRTMALLGVHACVAVTAVTVQNTLGVKDIHEVPNDVVAGQIEAVVTDIGVQAAKTGMLASSRIVATVAATWRRLELSVPLVVDPVCASMHGDPLLAPSALDSLRGQLFPLATLLTPNLDEARLLVDIEVVDAESQRAAAKALHALGPQWVLVKGGHLRSSDGSCDLLYDGVSCYQFDAQRLPTGDDHGGGDTLATAIAAALAHGFTVPDAVDFGKRWVTECLRAAYPLGRGHGPVSPLFRLS</sequence>
<reference key="1">
    <citation type="journal article" date="2002" name="J. Bacteriol.">
        <title>Whole-genome comparison of Mycobacterium tuberculosis clinical and laboratory strains.</title>
        <authorList>
            <person name="Fleischmann R.D."/>
            <person name="Alland D."/>
            <person name="Eisen J.A."/>
            <person name="Carpenter L."/>
            <person name="White O."/>
            <person name="Peterson J.D."/>
            <person name="DeBoy R.T."/>
            <person name="Dodson R.J."/>
            <person name="Gwinn M.L."/>
            <person name="Haft D.H."/>
            <person name="Hickey E.K."/>
            <person name="Kolonay J.F."/>
            <person name="Nelson W.C."/>
            <person name="Umayam L.A."/>
            <person name="Ermolaeva M.D."/>
            <person name="Salzberg S.L."/>
            <person name="Delcher A."/>
            <person name="Utterback T.R."/>
            <person name="Weidman J.F."/>
            <person name="Khouri H.M."/>
            <person name="Gill J."/>
            <person name="Mikula A."/>
            <person name="Bishai W."/>
            <person name="Jacobs W.R. Jr."/>
            <person name="Venter J.C."/>
            <person name="Fraser C.M."/>
        </authorList>
    </citation>
    <scope>NUCLEOTIDE SEQUENCE [LARGE SCALE GENOMIC DNA]</scope>
    <source>
        <strain>CDC 1551 / Oshkosh</strain>
    </source>
</reference>
<comment type="function">
    <text evidence="2">Catalyzes the phosphorylation of hydroxymethylpyrimidine phosphate (HMP-P) to HMP-PP, and of HMP to HMP-P.</text>
</comment>
<comment type="catalytic activity">
    <reaction evidence="2">
        <text>4-amino-5-hydroxymethyl-2-methylpyrimidine + ATP = 4-amino-2-methyl-5-(phosphooxymethyl)pyrimidine + ADP + H(+)</text>
        <dbReference type="Rhea" id="RHEA:23096"/>
        <dbReference type="ChEBI" id="CHEBI:15378"/>
        <dbReference type="ChEBI" id="CHEBI:16892"/>
        <dbReference type="ChEBI" id="CHEBI:30616"/>
        <dbReference type="ChEBI" id="CHEBI:58354"/>
        <dbReference type="ChEBI" id="CHEBI:456216"/>
        <dbReference type="EC" id="2.7.1.49"/>
    </reaction>
</comment>
<comment type="catalytic activity">
    <reaction evidence="2">
        <text>4-amino-2-methyl-5-(phosphooxymethyl)pyrimidine + ATP = 4-amino-2-methyl-5-(diphosphooxymethyl)pyrimidine + ADP</text>
        <dbReference type="Rhea" id="RHEA:19893"/>
        <dbReference type="ChEBI" id="CHEBI:30616"/>
        <dbReference type="ChEBI" id="CHEBI:57841"/>
        <dbReference type="ChEBI" id="CHEBI:58354"/>
        <dbReference type="ChEBI" id="CHEBI:456216"/>
        <dbReference type="EC" id="2.7.4.7"/>
    </reaction>
</comment>
<comment type="pathway">
    <text>Cofactor biosynthesis; thiamine diphosphate biosynthesis; 4-amino-2-methyl-5-diphosphomethylpyrimidine from 5-amino-1-(5-phospho-D-ribosyl)imidazole: step 2/3.</text>
</comment>
<comment type="pathway">
    <text>Cofactor biosynthesis; thiamine diphosphate biosynthesis; 4-amino-2-methyl-5-diphosphomethylpyrimidine from 5-amino-1-(5-phospho-D-ribosyl)imidazole: step 3/3.</text>
</comment>
<comment type="similarity">
    <text evidence="4">Belongs to the ThiD family.</text>
</comment>
<comment type="sequence caution" evidence="3">
    <conflict type="erroneous initiation">
        <sequence resource="EMBL-CDS" id="AAK44660"/>
    </conflict>
    <text>Truncated N-terminus.</text>
</comment>
<evidence type="ECO:0000250" key="1"/>
<evidence type="ECO:0000250" key="2">
    <source>
        <dbReference type="UniProtKB" id="P76422"/>
    </source>
</evidence>
<evidence type="ECO:0000250" key="3">
    <source>
        <dbReference type="UniProtKB" id="P9WG77"/>
    </source>
</evidence>
<evidence type="ECO:0000305" key="4"/>
<dbReference type="EC" id="2.7.1.49" evidence="2"/>
<dbReference type="EC" id="2.7.4.7" evidence="2"/>
<dbReference type="EMBL" id="AE000516">
    <property type="protein sequence ID" value="AAK44660.1"/>
    <property type="status" value="ALT_INIT"/>
    <property type="molecule type" value="Genomic_DNA"/>
</dbReference>
<dbReference type="PIR" id="D70630">
    <property type="entry name" value="D70630"/>
</dbReference>
<dbReference type="RefSeq" id="WP_003898443.1">
    <property type="nucleotide sequence ID" value="NZ_KK341227.1"/>
</dbReference>
<dbReference type="SMR" id="P9WG76"/>
<dbReference type="KEGG" id="mtc:MT0436"/>
<dbReference type="PATRIC" id="fig|83331.31.peg.465"/>
<dbReference type="HOGENOM" id="CLU_020520_0_0_11"/>
<dbReference type="UniPathway" id="UPA00060">
    <property type="reaction ID" value="UER00137"/>
</dbReference>
<dbReference type="UniPathway" id="UPA00060">
    <property type="reaction ID" value="UER00138"/>
</dbReference>
<dbReference type="Proteomes" id="UP000001020">
    <property type="component" value="Chromosome"/>
</dbReference>
<dbReference type="GO" id="GO:0005829">
    <property type="term" value="C:cytosol"/>
    <property type="evidence" value="ECO:0007669"/>
    <property type="project" value="TreeGrafter"/>
</dbReference>
<dbReference type="GO" id="GO:0005524">
    <property type="term" value="F:ATP binding"/>
    <property type="evidence" value="ECO:0007669"/>
    <property type="project" value="UniProtKB-KW"/>
</dbReference>
<dbReference type="GO" id="GO:0008902">
    <property type="term" value="F:hydroxymethylpyrimidine kinase activity"/>
    <property type="evidence" value="ECO:0007669"/>
    <property type="project" value="UniProtKB-EC"/>
</dbReference>
<dbReference type="GO" id="GO:0008972">
    <property type="term" value="F:phosphomethylpyrimidine kinase activity"/>
    <property type="evidence" value="ECO:0007669"/>
    <property type="project" value="UniProtKB-EC"/>
</dbReference>
<dbReference type="GO" id="GO:0009228">
    <property type="term" value="P:thiamine biosynthetic process"/>
    <property type="evidence" value="ECO:0007669"/>
    <property type="project" value="UniProtKB-KW"/>
</dbReference>
<dbReference type="GO" id="GO:0009229">
    <property type="term" value="P:thiamine diphosphate biosynthetic process"/>
    <property type="evidence" value="ECO:0007669"/>
    <property type="project" value="UniProtKB-UniPathway"/>
</dbReference>
<dbReference type="CDD" id="cd01169">
    <property type="entry name" value="HMPP_kinase"/>
    <property type="match status" value="1"/>
</dbReference>
<dbReference type="FunFam" id="3.40.1190.20:FF:000003">
    <property type="entry name" value="Phosphomethylpyrimidine kinase ThiD"/>
    <property type="match status" value="1"/>
</dbReference>
<dbReference type="Gene3D" id="3.40.1190.20">
    <property type="match status" value="1"/>
</dbReference>
<dbReference type="InterPro" id="IPR004399">
    <property type="entry name" value="HMP/HMP-P_kinase_dom"/>
</dbReference>
<dbReference type="InterPro" id="IPR013749">
    <property type="entry name" value="PM/HMP-P_kinase-1"/>
</dbReference>
<dbReference type="InterPro" id="IPR029056">
    <property type="entry name" value="Ribokinase-like"/>
</dbReference>
<dbReference type="NCBIfam" id="TIGR00097">
    <property type="entry name" value="HMP-P_kinase"/>
    <property type="match status" value="1"/>
</dbReference>
<dbReference type="PANTHER" id="PTHR20858:SF17">
    <property type="entry name" value="HYDROXYMETHYLPYRIMIDINE_PHOSPHOMETHYLPYRIMIDINE KINASE THI20-RELATED"/>
    <property type="match status" value="1"/>
</dbReference>
<dbReference type="PANTHER" id="PTHR20858">
    <property type="entry name" value="PHOSPHOMETHYLPYRIMIDINE KINASE"/>
    <property type="match status" value="1"/>
</dbReference>
<dbReference type="Pfam" id="PF08543">
    <property type="entry name" value="Phos_pyr_kin"/>
    <property type="match status" value="1"/>
</dbReference>
<dbReference type="SUPFAM" id="SSF53613">
    <property type="entry name" value="Ribokinase-like"/>
    <property type="match status" value="1"/>
</dbReference>
<accession>P9WG76</accession>
<accession>L0T6F0</accession>
<accession>P66913</accession>
<accession>P96268</accession>